<comment type="function">
    <text evidence="1">Catalyzes the conversion of N5-carboxyaminoimidazole ribonucleotide (N5-CAIR) to 4-carboxy-5-aminoimidazole ribonucleotide (CAIR).</text>
</comment>
<comment type="catalytic activity">
    <reaction evidence="1">
        <text>5-carboxyamino-1-(5-phospho-D-ribosyl)imidazole + H(+) = 5-amino-1-(5-phospho-D-ribosyl)imidazole-4-carboxylate</text>
        <dbReference type="Rhea" id="RHEA:13193"/>
        <dbReference type="ChEBI" id="CHEBI:15378"/>
        <dbReference type="ChEBI" id="CHEBI:58730"/>
        <dbReference type="ChEBI" id="CHEBI:77657"/>
        <dbReference type="EC" id="5.4.99.18"/>
    </reaction>
</comment>
<comment type="pathway">
    <text evidence="1">Purine metabolism; IMP biosynthesis via de novo pathway; 5-amino-1-(5-phospho-D-ribosyl)imidazole-4-carboxylate from 5-amino-1-(5-phospho-D-ribosyl)imidazole (N5-CAIR route): step 2/2.</text>
</comment>
<comment type="similarity">
    <text evidence="1">Belongs to the AIR carboxylase family. Class I subfamily.</text>
</comment>
<sequence>MKVGIIMGSKSDWPTMKLAAEMLDRFGVEYETKVVSAHRTPHLLAEYASTAKERGLKVIIAGAGGAAHLPGMAAAFTSLPVLGVPVQSRALSGLDSLYSIVQMPKGIAVGTLAIGEAGAANAGLLAAQILGTHDENIMAKVEAFRSEQTESVLANPNPAED</sequence>
<accession>Q8DDD7</accession>
<keyword id="KW-0413">Isomerase</keyword>
<keyword id="KW-0658">Purine biosynthesis</keyword>
<gene>
    <name evidence="1" type="primary">purE</name>
    <name type="ordered locus">VV1_1054</name>
</gene>
<feature type="chain" id="PRO_0000074984" description="N5-carboxyaminoimidazole ribonucleotide mutase">
    <location>
        <begin position="1"/>
        <end position="161"/>
    </location>
</feature>
<feature type="binding site" evidence="1">
    <location>
        <position position="9"/>
    </location>
    <ligand>
        <name>substrate</name>
    </ligand>
</feature>
<feature type="binding site" evidence="1">
    <location>
        <position position="12"/>
    </location>
    <ligand>
        <name>substrate</name>
    </ligand>
</feature>
<feature type="binding site" evidence="1">
    <location>
        <position position="39"/>
    </location>
    <ligand>
        <name>substrate</name>
    </ligand>
</feature>
<evidence type="ECO:0000255" key="1">
    <source>
        <dbReference type="HAMAP-Rule" id="MF_01929"/>
    </source>
</evidence>
<proteinExistence type="inferred from homology"/>
<dbReference type="EC" id="5.4.99.18" evidence="1"/>
<dbReference type="EMBL" id="AE016795">
    <property type="protein sequence ID" value="AAO09541.1"/>
    <property type="molecule type" value="Genomic_DNA"/>
</dbReference>
<dbReference type="RefSeq" id="WP_011079087.1">
    <property type="nucleotide sequence ID" value="NC_004459.3"/>
</dbReference>
<dbReference type="SMR" id="Q8DDD7"/>
<dbReference type="KEGG" id="vvu:VV1_1054"/>
<dbReference type="HOGENOM" id="CLU_094982_2_2_6"/>
<dbReference type="UniPathway" id="UPA00074">
    <property type="reaction ID" value="UER00943"/>
</dbReference>
<dbReference type="Proteomes" id="UP000002275">
    <property type="component" value="Chromosome 1"/>
</dbReference>
<dbReference type="GO" id="GO:0034023">
    <property type="term" value="F:5-(carboxyamino)imidazole ribonucleotide mutase activity"/>
    <property type="evidence" value="ECO:0007669"/>
    <property type="project" value="UniProtKB-UniRule"/>
</dbReference>
<dbReference type="GO" id="GO:0006189">
    <property type="term" value="P:'de novo' IMP biosynthetic process"/>
    <property type="evidence" value="ECO:0007669"/>
    <property type="project" value="UniProtKB-UniRule"/>
</dbReference>
<dbReference type="FunFam" id="3.40.50.1970:FF:000004">
    <property type="entry name" value="N5-carboxyaminoimidazole ribonucleotide mutase"/>
    <property type="match status" value="1"/>
</dbReference>
<dbReference type="Gene3D" id="3.40.50.1970">
    <property type="match status" value="1"/>
</dbReference>
<dbReference type="HAMAP" id="MF_01929">
    <property type="entry name" value="PurE_classI"/>
    <property type="match status" value="1"/>
</dbReference>
<dbReference type="InterPro" id="IPR033747">
    <property type="entry name" value="PurE_ClassI"/>
</dbReference>
<dbReference type="InterPro" id="IPR000031">
    <property type="entry name" value="PurE_dom"/>
</dbReference>
<dbReference type="InterPro" id="IPR024694">
    <property type="entry name" value="PurE_prokaryotes"/>
</dbReference>
<dbReference type="NCBIfam" id="TIGR01162">
    <property type="entry name" value="purE"/>
    <property type="match status" value="1"/>
</dbReference>
<dbReference type="PANTHER" id="PTHR23046:SF2">
    <property type="entry name" value="PHOSPHORIBOSYLAMINOIMIDAZOLE CARBOXYLASE"/>
    <property type="match status" value="1"/>
</dbReference>
<dbReference type="PANTHER" id="PTHR23046">
    <property type="entry name" value="PHOSPHORIBOSYLAMINOIMIDAZOLE CARBOXYLASE CATALYTIC SUBUNIT"/>
    <property type="match status" value="1"/>
</dbReference>
<dbReference type="Pfam" id="PF00731">
    <property type="entry name" value="AIRC"/>
    <property type="match status" value="1"/>
</dbReference>
<dbReference type="PIRSF" id="PIRSF001338">
    <property type="entry name" value="AIR_carboxylase"/>
    <property type="match status" value="1"/>
</dbReference>
<dbReference type="SMART" id="SM01001">
    <property type="entry name" value="AIRC"/>
    <property type="match status" value="1"/>
</dbReference>
<dbReference type="SUPFAM" id="SSF52255">
    <property type="entry name" value="N5-CAIR mutase (phosphoribosylaminoimidazole carboxylase, PurE)"/>
    <property type="match status" value="1"/>
</dbReference>
<reference key="1">
    <citation type="submission" date="2002-12" db="EMBL/GenBank/DDBJ databases">
        <title>Complete genome sequence of Vibrio vulnificus CMCP6.</title>
        <authorList>
            <person name="Rhee J.H."/>
            <person name="Kim S.Y."/>
            <person name="Chung S.S."/>
            <person name="Kim J.J."/>
            <person name="Moon Y.H."/>
            <person name="Jeong H."/>
            <person name="Choy H.E."/>
        </authorList>
    </citation>
    <scope>NUCLEOTIDE SEQUENCE [LARGE SCALE GENOMIC DNA]</scope>
    <source>
        <strain>CMCP6</strain>
    </source>
</reference>
<name>PURE_VIBVU</name>
<protein>
    <recommendedName>
        <fullName evidence="1">N5-carboxyaminoimidazole ribonucleotide mutase</fullName>
        <shortName evidence="1">N5-CAIR mutase</shortName>
        <ecNumber evidence="1">5.4.99.18</ecNumber>
    </recommendedName>
    <alternativeName>
        <fullName evidence="1">5-(carboxyamino)imidazole ribonucleotide mutase</fullName>
    </alternativeName>
</protein>
<organism>
    <name type="scientific">Vibrio vulnificus (strain CMCP6)</name>
    <dbReference type="NCBI Taxonomy" id="216895"/>
    <lineage>
        <taxon>Bacteria</taxon>
        <taxon>Pseudomonadati</taxon>
        <taxon>Pseudomonadota</taxon>
        <taxon>Gammaproteobacteria</taxon>
        <taxon>Vibrionales</taxon>
        <taxon>Vibrionaceae</taxon>
        <taxon>Vibrio</taxon>
    </lineage>
</organism>